<gene>
    <name evidence="1" type="primary">leuA</name>
    <name type="ordered locus">Olsu_1545</name>
</gene>
<accession>E1QWZ1</accession>
<protein>
    <recommendedName>
        <fullName evidence="1">2-isopropylmalate synthase</fullName>
        <ecNumber evidence="1">2.3.3.13</ecNumber>
    </recommendedName>
    <alternativeName>
        <fullName evidence="1">Alpha-IPM synthase</fullName>
    </alternativeName>
    <alternativeName>
        <fullName evidence="1">Alpha-isopropylmalate synthase</fullName>
    </alternativeName>
</protein>
<reference key="1">
    <citation type="journal article" date="2010" name="Stand. Genomic Sci.">
        <title>Complete genome sequence of Olsenella uli type strain (VPI D76D-27C).</title>
        <authorList>
            <person name="Goker M."/>
            <person name="Held B."/>
            <person name="Lucas S."/>
            <person name="Nolan M."/>
            <person name="Yasawong M."/>
            <person name="Glavina Del Rio T."/>
            <person name="Tice H."/>
            <person name="Cheng J.F."/>
            <person name="Bruce D."/>
            <person name="Detter J.C."/>
            <person name="Tapia R."/>
            <person name="Han C."/>
            <person name="Goodwin L."/>
            <person name="Pitluck S."/>
            <person name="Liolios K."/>
            <person name="Ivanova N."/>
            <person name="Mavromatis K."/>
            <person name="Mikhailova N."/>
            <person name="Pati A."/>
            <person name="Chen A."/>
            <person name="Palaniappan K."/>
            <person name="Land M."/>
            <person name="Hauser L."/>
            <person name="Chang Y.J."/>
            <person name="Jeffries C.D."/>
            <person name="Rohde M."/>
            <person name="Sikorski J."/>
            <person name="Pukall R."/>
            <person name="Woyke T."/>
            <person name="Bristow J."/>
            <person name="Eisen J.A."/>
            <person name="Markowitz V."/>
            <person name="Hugenholtz P."/>
            <person name="Kyrpides N.C."/>
            <person name="Klenk H.P."/>
            <person name="Lapidus A."/>
        </authorList>
    </citation>
    <scope>NUCLEOTIDE SEQUENCE [LARGE SCALE GENOMIC DNA]</scope>
    <source>
        <strain>ATCC 49627 / DSM 7084 / CCUG 31166 / CIP 109912 / JCM 12494 / LMG 11480 / NCIMB 702895 / VPI D76D-27C</strain>
    </source>
</reference>
<organism>
    <name type="scientific">Olsenella uli (strain ATCC 49627 / DSM 7084 / CCUG 31166 / CIP 109912 / JCM 12494 / LMG 11480 / NCIMB 702895 / VPI D76D-27C)</name>
    <name type="common">Lactobacillus uli</name>
    <dbReference type="NCBI Taxonomy" id="633147"/>
    <lineage>
        <taxon>Bacteria</taxon>
        <taxon>Bacillati</taxon>
        <taxon>Actinomycetota</taxon>
        <taxon>Coriobacteriia</taxon>
        <taxon>Coriobacteriales</taxon>
        <taxon>Atopobiaceae</taxon>
        <taxon>Olsenella</taxon>
    </lineage>
</organism>
<keyword id="KW-0028">Amino-acid biosynthesis</keyword>
<keyword id="KW-0100">Branched-chain amino acid biosynthesis</keyword>
<keyword id="KW-0963">Cytoplasm</keyword>
<keyword id="KW-0432">Leucine biosynthesis</keyword>
<keyword id="KW-0464">Manganese</keyword>
<keyword id="KW-0479">Metal-binding</keyword>
<keyword id="KW-1185">Reference proteome</keyword>
<keyword id="KW-0808">Transferase</keyword>
<name>LEU1_OLSUV</name>
<evidence type="ECO:0000255" key="1">
    <source>
        <dbReference type="HAMAP-Rule" id="MF_01025"/>
    </source>
</evidence>
<evidence type="ECO:0000256" key="2">
    <source>
        <dbReference type="SAM" id="MobiDB-lite"/>
    </source>
</evidence>
<comment type="function">
    <text evidence="1">Catalyzes the condensation of the acetyl group of acetyl-CoA with 3-methyl-2-oxobutanoate (2-ketoisovalerate) to form 3-carboxy-3-hydroxy-4-methylpentanoate (2-isopropylmalate).</text>
</comment>
<comment type="catalytic activity">
    <reaction evidence="1">
        <text>3-methyl-2-oxobutanoate + acetyl-CoA + H2O = (2S)-2-isopropylmalate + CoA + H(+)</text>
        <dbReference type="Rhea" id="RHEA:21524"/>
        <dbReference type="ChEBI" id="CHEBI:1178"/>
        <dbReference type="ChEBI" id="CHEBI:11851"/>
        <dbReference type="ChEBI" id="CHEBI:15377"/>
        <dbReference type="ChEBI" id="CHEBI:15378"/>
        <dbReference type="ChEBI" id="CHEBI:57287"/>
        <dbReference type="ChEBI" id="CHEBI:57288"/>
        <dbReference type="EC" id="2.3.3.13"/>
    </reaction>
</comment>
<comment type="cofactor">
    <cofactor evidence="1">
        <name>Mn(2+)</name>
        <dbReference type="ChEBI" id="CHEBI:29035"/>
    </cofactor>
</comment>
<comment type="pathway">
    <text evidence="1">Amino-acid biosynthesis; L-leucine biosynthesis; L-leucine from 3-methyl-2-oxobutanoate: step 1/4.</text>
</comment>
<comment type="subunit">
    <text evidence="1">Homodimer.</text>
</comment>
<comment type="subcellular location">
    <subcellularLocation>
        <location evidence="1">Cytoplasm</location>
    </subcellularLocation>
</comment>
<comment type="similarity">
    <text evidence="1">Belongs to the alpha-IPM synthase/homocitrate synthase family. LeuA type 1 subfamily.</text>
</comment>
<sequence>MTRKIDIFDTTLRDGEQSPGASMNTEEKLIVAQQLLRMHVDVIEAGFPISSPGDFRSVQEIGRLAGDDAVVVGLTRAVDKDIDRAAEALSCAKRPRIHTGLGVSPQHLADKLRISEDECVERAIRCVRYAKRYVEDVQFYAEDAGRADQGFLERVIQAVIEAGATVVNIPDTTGYQMPAAFGARIKGLCDNVRGIENVTIAVHTHNDLGMATALALAGVENGATQIECTINGLGERAGNTALEEVVMALRMHGDELDGHTDVVTQELTRASRLVSRITGMQVQANKAIVGANAFAHSSGIHQDGVLKSRGTYEIIDPADVGAAGSEIILSARSGHAALRHRLSELGYSFPESEFDDVYQRFLEIADQKKEVFDEDLESMVQERQRDVTAIYALESVQVVCGDAAIPTATVHITDEVGGEHVVACTGTGPVDAAYKAIDKVVSVHGDLQEFAVKAITRGIDAIGEVTVRIVAGDGRLYTGRGSDTDIVVSSAKAYVNAINRMIQTTRSKQGK</sequence>
<feature type="chain" id="PRO_0000406896" description="2-isopropylmalate synthase">
    <location>
        <begin position="1"/>
        <end position="511"/>
    </location>
</feature>
<feature type="domain" description="Pyruvate carboxyltransferase" evidence="1">
    <location>
        <begin position="5"/>
        <end position="268"/>
    </location>
</feature>
<feature type="region of interest" description="Disordered" evidence="2">
    <location>
        <begin position="1"/>
        <end position="23"/>
    </location>
</feature>
<feature type="region of interest" description="Regulatory domain" evidence="1">
    <location>
        <begin position="392"/>
        <end position="511"/>
    </location>
</feature>
<feature type="compositionally biased region" description="Basic and acidic residues" evidence="2">
    <location>
        <begin position="1"/>
        <end position="16"/>
    </location>
</feature>
<feature type="binding site" evidence="1">
    <location>
        <position position="14"/>
    </location>
    <ligand>
        <name>Mn(2+)</name>
        <dbReference type="ChEBI" id="CHEBI:29035"/>
    </ligand>
</feature>
<feature type="binding site" evidence="1">
    <location>
        <position position="203"/>
    </location>
    <ligand>
        <name>Mn(2+)</name>
        <dbReference type="ChEBI" id="CHEBI:29035"/>
    </ligand>
</feature>
<feature type="binding site" evidence="1">
    <location>
        <position position="205"/>
    </location>
    <ligand>
        <name>Mn(2+)</name>
        <dbReference type="ChEBI" id="CHEBI:29035"/>
    </ligand>
</feature>
<feature type="binding site" evidence="1">
    <location>
        <position position="239"/>
    </location>
    <ligand>
        <name>Mn(2+)</name>
        <dbReference type="ChEBI" id="CHEBI:29035"/>
    </ligand>
</feature>
<dbReference type="EC" id="2.3.3.13" evidence="1"/>
<dbReference type="EMBL" id="CP002106">
    <property type="protein sequence ID" value="ADK68644.1"/>
    <property type="molecule type" value="Genomic_DNA"/>
</dbReference>
<dbReference type="RefSeq" id="WP_013252396.1">
    <property type="nucleotide sequence ID" value="NC_014363.1"/>
</dbReference>
<dbReference type="SMR" id="E1QWZ1"/>
<dbReference type="STRING" id="633147.Olsu_1545"/>
<dbReference type="GeneID" id="78512930"/>
<dbReference type="KEGG" id="ols:Olsu_1545"/>
<dbReference type="PATRIC" id="fig|633147.7.peg.1242"/>
<dbReference type="eggNOG" id="COG0119">
    <property type="taxonomic scope" value="Bacteria"/>
</dbReference>
<dbReference type="HOGENOM" id="CLU_022158_0_1_11"/>
<dbReference type="OrthoDB" id="9803573at2"/>
<dbReference type="UniPathway" id="UPA00048">
    <property type="reaction ID" value="UER00070"/>
</dbReference>
<dbReference type="Proteomes" id="UP000000333">
    <property type="component" value="Chromosome"/>
</dbReference>
<dbReference type="GO" id="GO:0005737">
    <property type="term" value="C:cytoplasm"/>
    <property type="evidence" value="ECO:0007669"/>
    <property type="project" value="UniProtKB-SubCell"/>
</dbReference>
<dbReference type="GO" id="GO:0003852">
    <property type="term" value="F:2-isopropylmalate synthase activity"/>
    <property type="evidence" value="ECO:0007669"/>
    <property type="project" value="UniProtKB-UniRule"/>
</dbReference>
<dbReference type="GO" id="GO:0003985">
    <property type="term" value="F:acetyl-CoA C-acetyltransferase activity"/>
    <property type="evidence" value="ECO:0007669"/>
    <property type="project" value="UniProtKB-UniRule"/>
</dbReference>
<dbReference type="GO" id="GO:0030145">
    <property type="term" value="F:manganese ion binding"/>
    <property type="evidence" value="ECO:0007669"/>
    <property type="project" value="UniProtKB-UniRule"/>
</dbReference>
<dbReference type="GO" id="GO:0009098">
    <property type="term" value="P:L-leucine biosynthetic process"/>
    <property type="evidence" value="ECO:0007669"/>
    <property type="project" value="UniProtKB-UniRule"/>
</dbReference>
<dbReference type="CDD" id="cd07940">
    <property type="entry name" value="DRE_TIM_IPMS"/>
    <property type="match status" value="1"/>
</dbReference>
<dbReference type="FunFam" id="1.10.238.260:FF:000001">
    <property type="entry name" value="2-isopropylmalate synthase"/>
    <property type="match status" value="1"/>
</dbReference>
<dbReference type="FunFam" id="3.20.20.70:FF:000010">
    <property type="entry name" value="2-isopropylmalate synthase"/>
    <property type="match status" value="1"/>
</dbReference>
<dbReference type="Gene3D" id="1.10.238.260">
    <property type="match status" value="1"/>
</dbReference>
<dbReference type="Gene3D" id="3.30.160.270">
    <property type="match status" value="1"/>
</dbReference>
<dbReference type="Gene3D" id="3.20.20.70">
    <property type="entry name" value="Aldolase class I"/>
    <property type="match status" value="1"/>
</dbReference>
<dbReference type="HAMAP" id="MF_01025">
    <property type="entry name" value="LeuA_type1"/>
    <property type="match status" value="1"/>
</dbReference>
<dbReference type="InterPro" id="IPR050073">
    <property type="entry name" value="2-IPM_HCS-like"/>
</dbReference>
<dbReference type="InterPro" id="IPR013709">
    <property type="entry name" value="2-isopropylmalate_synth_dimer"/>
</dbReference>
<dbReference type="InterPro" id="IPR002034">
    <property type="entry name" value="AIPM/Hcit_synth_CS"/>
</dbReference>
<dbReference type="InterPro" id="IPR013785">
    <property type="entry name" value="Aldolase_TIM"/>
</dbReference>
<dbReference type="InterPro" id="IPR054691">
    <property type="entry name" value="LeuA/HCS_post-cat"/>
</dbReference>
<dbReference type="InterPro" id="IPR036230">
    <property type="entry name" value="LeuA_allosteric_dom_sf"/>
</dbReference>
<dbReference type="InterPro" id="IPR005671">
    <property type="entry name" value="LeuA_bact_synth"/>
</dbReference>
<dbReference type="InterPro" id="IPR000891">
    <property type="entry name" value="PYR_CT"/>
</dbReference>
<dbReference type="NCBIfam" id="TIGR00973">
    <property type="entry name" value="leuA_bact"/>
    <property type="match status" value="1"/>
</dbReference>
<dbReference type="NCBIfam" id="NF002086">
    <property type="entry name" value="PRK00915.1-3"/>
    <property type="match status" value="1"/>
</dbReference>
<dbReference type="PANTHER" id="PTHR10277:SF9">
    <property type="entry name" value="2-ISOPROPYLMALATE SYNTHASE 1, CHLOROPLASTIC-RELATED"/>
    <property type="match status" value="1"/>
</dbReference>
<dbReference type="PANTHER" id="PTHR10277">
    <property type="entry name" value="HOMOCITRATE SYNTHASE-RELATED"/>
    <property type="match status" value="1"/>
</dbReference>
<dbReference type="Pfam" id="PF22617">
    <property type="entry name" value="HCS_D2"/>
    <property type="match status" value="1"/>
</dbReference>
<dbReference type="Pfam" id="PF00682">
    <property type="entry name" value="HMGL-like"/>
    <property type="match status" value="1"/>
</dbReference>
<dbReference type="Pfam" id="PF08502">
    <property type="entry name" value="LeuA_dimer"/>
    <property type="match status" value="1"/>
</dbReference>
<dbReference type="SMART" id="SM00917">
    <property type="entry name" value="LeuA_dimer"/>
    <property type="match status" value="1"/>
</dbReference>
<dbReference type="SUPFAM" id="SSF110921">
    <property type="entry name" value="2-isopropylmalate synthase LeuA, allosteric (dimerisation) domain"/>
    <property type="match status" value="1"/>
</dbReference>
<dbReference type="SUPFAM" id="SSF51569">
    <property type="entry name" value="Aldolase"/>
    <property type="match status" value="1"/>
</dbReference>
<dbReference type="PROSITE" id="PS00815">
    <property type="entry name" value="AIPM_HOMOCIT_SYNTH_1"/>
    <property type="match status" value="1"/>
</dbReference>
<dbReference type="PROSITE" id="PS00816">
    <property type="entry name" value="AIPM_HOMOCIT_SYNTH_2"/>
    <property type="match status" value="1"/>
</dbReference>
<dbReference type="PROSITE" id="PS50991">
    <property type="entry name" value="PYR_CT"/>
    <property type="match status" value="1"/>
</dbReference>
<proteinExistence type="inferred from homology"/>